<comment type="function">
    <text evidence="1">Toxic component of a type II toxin-antitoxin (TA) system (By similarity).</text>
</comment>
<comment type="function">
    <text evidence="2 4">Has ribonuclease activity (PubMed:22539524). Has a slow ssDNA exonuclease activity (PubMed:14734548).</text>
</comment>
<comment type="cofactor">
    <cofactor evidence="1 2 4">
        <name>Mg(2+)</name>
        <dbReference type="ChEBI" id="CHEBI:18420"/>
    </cofactor>
</comment>
<comment type="activity regulation">
    <text evidence="4">Inhibited by EDTA.</text>
</comment>
<comment type="subunit">
    <text evidence="2">Homodimer, 2 of which then form a homotetramer.</text>
</comment>
<comment type="similarity">
    <text evidence="1">Belongs to the PINc/VapC protein family.</text>
</comment>
<feature type="chain" id="PRO_0000407904" description="Exonuclease VapC9">
    <location>
        <begin position="1"/>
        <end position="133"/>
    </location>
</feature>
<feature type="domain" description="PINc" evidence="1">
    <location>
        <begin position="5"/>
        <end position="113"/>
    </location>
</feature>
<feature type="binding site" evidence="1">
    <location>
        <position position="8"/>
    </location>
    <ligand>
        <name>Mg(2+)</name>
        <dbReference type="ChEBI" id="CHEBI:18420"/>
    </ligand>
</feature>
<feature type="binding site" evidence="1">
    <location>
        <position position="92"/>
    </location>
    <ligand>
        <name>Mg(2+)</name>
        <dbReference type="ChEBI" id="CHEBI:18420"/>
    </ligand>
</feature>
<feature type="binding site" evidence="1">
    <location>
        <position position="110"/>
    </location>
    <ligand>
        <name>Mg(2+)</name>
        <dbReference type="ChEBI" id="CHEBI:18420"/>
    </ligand>
</feature>
<feature type="mutagenesis site" description="Facilitates structure determination." evidence="3">
    <original>L</original>
    <variation>M</variation>
    <location>
        <position position="65"/>
    </location>
</feature>
<feature type="mutagenesis site" description="Facilitates structure determination." evidence="3">
    <original>L</original>
    <variation>M</variation>
    <location>
        <position position="80"/>
    </location>
</feature>
<feature type="strand" evidence="7">
    <location>
        <begin position="5"/>
        <end position="7"/>
    </location>
</feature>
<feature type="helix" evidence="7">
    <location>
        <begin position="9"/>
        <end position="15"/>
    </location>
</feature>
<feature type="helix" evidence="7">
    <location>
        <begin position="19"/>
        <end position="22"/>
    </location>
</feature>
<feature type="helix" evidence="7">
    <location>
        <begin position="23"/>
        <end position="28"/>
    </location>
</feature>
<feature type="strand" evidence="7">
    <location>
        <begin position="29"/>
        <end position="31"/>
    </location>
</feature>
<feature type="helix" evidence="7">
    <location>
        <begin position="33"/>
        <end position="48"/>
    </location>
</feature>
<feature type="helix" evidence="7">
    <location>
        <begin position="54"/>
        <end position="66"/>
    </location>
</feature>
<feature type="strand" evidence="7">
    <location>
        <begin position="68"/>
        <end position="70"/>
    </location>
</feature>
<feature type="helix" evidence="7">
    <location>
        <begin position="76"/>
        <end position="86"/>
    </location>
</feature>
<feature type="helix" evidence="7">
    <location>
        <begin position="90"/>
        <end position="101"/>
    </location>
</feature>
<feature type="strand" evidence="7">
    <location>
        <begin position="105"/>
        <end position="107"/>
    </location>
</feature>
<feature type="helix" evidence="7">
    <location>
        <begin position="111"/>
        <end position="116"/>
    </location>
</feature>
<feature type="helix" evidence="7">
    <location>
        <begin position="123"/>
        <end position="132"/>
    </location>
</feature>
<proteinExistence type="evidence at protein level"/>
<sequence>MPVEYLVDASALYALAAHYDKWIKHREKLAILHLTIYEAGNALWKEARLGRVDWAAASRHLKKVLSSFKVLEDPPLDEVLRVAVERGLTFYDASYAYVAESSGLVLVTQDRELLAKTKGAIDVETLLVRLAAQ</sequence>
<reference key="1">
    <citation type="journal article" date="2002" name="Proc. Natl. Acad. Sci. U.S.A.">
        <title>Genome sequence of the hyperthermophilic crenarchaeon Pyrobaculum aerophilum.</title>
        <authorList>
            <person name="Fitz-Gibbon S.T."/>
            <person name="Ladner H."/>
            <person name="Kim U.-J."/>
            <person name="Stetter K.O."/>
            <person name="Simon M.I."/>
            <person name="Miller J.H."/>
        </authorList>
    </citation>
    <scope>NUCLEOTIDE SEQUENCE [LARGE SCALE GENOMIC DNA]</scope>
    <source>
        <strain>ATCC 51768 / DSM 7523 / JCM 9630 / CIP 104966 / NBRC 100827 / IM2</strain>
    </source>
</reference>
<reference key="2">
    <citation type="journal article" date="2005" name="Nucleic Acids Res.">
        <title>Toxin-antitoxin loci are highly abundant in free-living but lost from host-associated prokaryotes.</title>
        <authorList>
            <person name="Pandey D.P."/>
            <person name="Gerdes K."/>
        </authorList>
    </citation>
    <scope>POSSIBLE FUNCTION</scope>
    <source>
        <strain>ATCC 51768 / DSM 7523 / JCM 9630 / CIP 104966 / NBRC 100827 / IM2</strain>
    </source>
</reference>
<reference key="3">
    <citation type="journal article" date="2004" name="Acta Crystallogr. D">
        <title>Crystallization and preliminary X-ray analysis of a conserved hypothetical protein PAE2754 from Pyrobaculum aerophilum and of a double Leu--&gt;Met mutant engineered for MAD phasing.</title>
        <authorList>
            <person name="Backbro K."/>
            <person name="Roos A."/>
            <person name="Baker E.N."/>
            <person name="Arcus V.L."/>
        </authorList>
    </citation>
    <scope>PRELIMINARY CRYSTALLIZATION</scope>
    <scope>MUTAGENESIS OF LEU-65 AND LEU-80</scope>
    <source>
        <strain>ATCC 51768 / DSM 7523 / JCM 9630 / CIP 104966 / NBRC 100827 / IM2</strain>
    </source>
</reference>
<reference key="4">
    <citation type="journal article" date="2012" name="RNA">
        <title>Determination of ribonuclease sequence-specificity using Pentaprobes and mass spectrometry.</title>
        <authorList>
            <person name="McKenzie J.L."/>
            <person name="Duyvestyn J.M."/>
            <person name="Smith T."/>
            <person name="Bendak K."/>
            <person name="Mackay J."/>
            <person name="Cursons R."/>
            <person name="Cook G.M."/>
            <person name="Arcus V.L."/>
        </authorList>
    </citation>
    <scope>FUNCTION</scope>
    <scope>ACTIVITY REGULATION</scope>
    <scope>COFACTOR</scope>
</reference>
<reference evidence="5 6" key="5">
    <citation type="journal article" date="2004" name="J. Biol. Chem.">
        <title>Distant structural homology leads to the functional characterization of an archaeal PIN domain as an exonuclease.</title>
        <authorList>
            <person name="Arcus V.L."/>
            <person name="Backbro K."/>
            <person name="Roos A."/>
            <person name="Daniel E.L."/>
            <person name="Baker E.N."/>
        </authorList>
    </citation>
    <scope>X-RAY CRYSTALLOGRAPHY (2.52 ANGSTROMS) OF 3-133</scope>
    <scope>SUBUNIT</scope>
    <scope>EXONUCLEASE ACTIVITY</scope>
    <scope>COFACTOR</scope>
    <source>
        <strain>ATCC 51768 / DSM 7523 / JCM 9630 / CIP 104966 / NBRC 100827 / IM2</strain>
    </source>
</reference>
<name>VAPC9_PYRAE</name>
<protein>
    <recommendedName>
        <fullName>Exonuclease VapC9</fullName>
    </recommendedName>
    <alternativeName>
        <fullName evidence="1">Putative toxin VapC9</fullName>
    </alternativeName>
    <alternativeName>
        <fullName evidence="1">Ribonuclease VapC9</fullName>
        <shortName evidence="1">RNase VapC9</shortName>
        <ecNumber evidence="1">3.1.-.-</ecNumber>
    </alternativeName>
</protein>
<gene>
    <name evidence="1" type="primary">vapC9</name>
    <name type="ordered locus">PAE2754</name>
</gene>
<keyword id="KW-0002">3D-structure</keyword>
<keyword id="KW-0269">Exonuclease</keyword>
<keyword id="KW-0378">Hydrolase</keyword>
<keyword id="KW-0460">Magnesium</keyword>
<keyword id="KW-0479">Metal-binding</keyword>
<keyword id="KW-0540">Nuclease</keyword>
<keyword id="KW-1185">Reference proteome</keyword>
<keyword id="KW-1277">Toxin-antitoxin system</keyword>
<accession>Q8ZUJ3</accession>
<evidence type="ECO:0000255" key="1">
    <source>
        <dbReference type="HAMAP-Rule" id="MF_00265"/>
    </source>
</evidence>
<evidence type="ECO:0000269" key="2">
    <source>
    </source>
</evidence>
<evidence type="ECO:0000269" key="3">
    <source>
    </source>
</evidence>
<evidence type="ECO:0000269" key="4">
    <source>
    </source>
</evidence>
<evidence type="ECO:0000312" key="5">
    <source>
        <dbReference type="PDB" id="1V8O"/>
    </source>
</evidence>
<evidence type="ECO:0000312" key="6">
    <source>
        <dbReference type="PDB" id="1V8P"/>
    </source>
</evidence>
<evidence type="ECO:0007829" key="7">
    <source>
        <dbReference type="PDB" id="1V8P"/>
    </source>
</evidence>
<dbReference type="EC" id="3.1.-.-" evidence="1"/>
<dbReference type="EMBL" id="AE009441">
    <property type="protein sequence ID" value="AAL64414.1"/>
    <property type="molecule type" value="Genomic_DNA"/>
</dbReference>
<dbReference type="PDB" id="1V8O">
    <property type="method" value="X-ray"/>
    <property type="resolution" value="2.80 A"/>
    <property type="chains" value="A/B/C/D/E/F/G/H=1-133"/>
</dbReference>
<dbReference type="PDB" id="1V8P">
    <property type="method" value="X-ray"/>
    <property type="resolution" value="2.52 A"/>
    <property type="chains" value="A/B/C/D/E/F/G/H/I/J/K/L=1-133"/>
</dbReference>
<dbReference type="PDBsum" id="1V8O"/>
<dbReference type="PDBsum" id="1V8P"/>
<dbReference type="SMR" id="Q8ZUJ3"/>
<dbReference type="STRING" id="178306.PAE2754"/>
<dbReference type="EnsemblBacteria" id="AAL64414">
    <property type="protein sequence ID" value="AAL64414"/>
    <property type="gene ID" value="PAE2754"/>
</dbReference>
<dbReference type="KEGG" id="pai:PAE2754"/>
<dbReference type="PATRIC" id="fig|178306.9.peg.2054"/>
<dbReference type="eggNOG" id="arCOG00729">
    <property type="taxonomic scope" value="Archaea"/>
</dbReference>
<dbReference type="HOGENOM" id="CLU_121774_5_0_2"/>
<dbReference type="InParanoid" id="Q8ZUJ3"/>
<dbReference type="EvolutionaryTrace" id="Q8ZUJ3"/>
<dbReference type="Proteomes" id="UP000002439">
    <property type="component" value="Chromosome"/>
</dbReference>
<dbReference type="GO" id="GO:0004527">
    <property type="term" value="F:exonuclease activity"/>
    <property type="evidence" value="ECO:0007669"/>
    <property type="project" value="UniProtKB-KW"/>
</dbReference>
<dbReference type="GO" id="GO:0000287">
    <property type="term" value="F:magnesium ion binding"/>
    <property type="evidence" value="ECO:0007669"/>
    <property type="project" value="UniProtKB-UniRule"/>
</dbReference>
<dbReference type="GO" id="GO:0004540">
    <property type="term" value="F:RNA nuclease activity"/>
    <property type="evidence" value="ECO:0007669"/>
    <property type="project" value="InterPro"/>
</dbReference>
<dbReference type="CDD" id="cd09873">
    <property type="entry name" value="PIN_Pae0151-like"/>
    <property type="match status" value="1"/>
</dbReference>
<dbReference type="Gene3D" id="3.40.50.1010">
    <property type="entry name" value="5'-nuclease"/>
    <property type="match status" value="1"/>
</dbReference>
<dbReference type="HAMAP" id="MF_00265">
    <property type="entry name" value="VapC_Nob1"/>
    <property type="match status" value="1"/>
</dbReference>
<dbReference type="InterPro" id="IPR029060">
    <property type="entry name" value="PIN-like_dom_sf"/>
</dbReference>
<dbReference type="InterPro" id="IPR002716">
    <property type="entry name" value="PIN_dom"/>
</dbReference>
<dbReference type="InterPro" id="IPR044153">
    <property type="entry name" value="PIN_Pae0151-like"/>
</dbReference>
<dbReference type="InterPro" id="IPR051619">
    <property type="entry name" value="TypeII_TA_RNase_PINc/VapC"/>
</dbReference>
<dbReference type="InterPro" id="IPR022907">
    <property type="entry name" value="VapC_family"/>
</dbReference>
<dbReference type="PANTHER" id="PTHR35901:SF1">
    <property type="entry name" value="EXONUCLEASE VAPC9"/>
    <property type="match status" value="1"/>
</dbReference>
<dbReference type="PANTHER" id="PTHR35901">
    <property type="entry name" value="RIBONUCLEASE VAPC3"/>
    <property type="match status" value="1"/>
</dbReference>
<dbReference type="Pfam" id="PF01850">
    <property type="entry name" value="PIN"/>
    <property type="match status" value="1"/>
</dbReference>
<dbReference type="SUPFAM" id="SSF88723">
    <property type="entry name" value="PIN domain-like"/>
    <property type="match status" value="1"/>
</dbReference>
<organism>
    <name type="scientific">Pyrobaculum aerophilum (strain ATCC 51768 / DSM 7523 / JCM 9630 / CIP 104966 / NBRC 100827 / IM2)</name>
    <dbReference type="NCBI Taxonomy" id="178306"/>
    <lineage>
        <taxon>Archaea</taxon>
        <taxon>Thermoproteota</taxon>
        <taxon>Thermoprotei</taxon>
        <taxon>Thermoproteales</taxon>
        <taxon>Thermoproteaceae</taxon>
        <taxon>Pyrobaculum</taxon>
    </lineage>
</organism>